<protein>
    <recommendedName>
        <fullName evidence="1">NAD(P)H-quinone oxidoreductase subunit 4L, chloroplastic</fullName>
        <ecNumber evidence="1">7.1.1.-</ecNumber>
    </recommendedName>
    <alternativeName>
        <fullName evidence="1">NAD(P)H dehydrogenase subunit 4L</fullName>
    </alternativeName>
    <alternativeName>
        <fullName evidence="1">NADH-plastoquinone oxidoreductase subunit 4L</fullName>
    </alternativeName>
</protein>
<sequence length="101" mass="11217">MMLEHVLVLSAYLFSVGLYGLITSRNMVRALMCLELILNAVNLNFVTFSDFFDSRQLKGAIFSIFVIAIAAAEAAIGLAIVSSIYRNRKSTRINQSNLLNK</sequence>
<accession>Q332S5</accession>
<proteinExistence type="inferred from homology"/>
<geneLocation type="chloroplast"/>
<dbReference type="EC" id="7.1.1.-" evidence="1"/>
<dbReference type="EMBL" id="DQ383816">
    <property type="protein sequence ID" value="ABD47286.1"/>
    <property type="molecule type" value="Genomic_DNA"/>
</dbReference>
<dbReference type="EMBL" id="AP007232">
    <property type="protein sequence ID" value="BAE47647.1"/>
    <property type="molecule type" value="Genomic_DNA"/>
</dbReference>
<dbReference type="RefSeq" id="YP_398380.1">
    <property type="nucleotide sequence ID" value="NC_007578.1"/>
</dbReference>
<dbReference type="SMR" id="Q332S5"/>
<dbReference type="GeneID" id="3772855"/>
<dbReference type="KEGG" id="lsv:3772855"/>
<dbReference type="OrthoDB" id="1925110at2759"/>
<dbReference type="GO" id="GO:0009535">
    <property type="term" value="C:chloroplast thylakoid membrane"/>
    <property type="evidence" value="ECO:0007669"/>
    <property type="project" value="UniProtKB-SubCell"/>
</dbReference>
<dbReference type="GO" id="GO:0016655">
    <property type="term" value="F:oxidoreductase activity, acting on NAD(P)H, quinone or similar compound as acceptor"/>
    <property type="evidence" value="ECO:0007669"/>
    <property type="project" value="UniProtKB-UniRule"/>
</dbReference>
<dbReference type="GO" id="GO:0048038">
    <property type="term" value="F:quinone binding"/>
    <property type="evidence" value="ECO:0007669"/>
    <property type="project" value="UniProtKB-KW"/>
</dbReference>
<dbReference type="GO" id="GO:0042773">
    <property type="term" value="P:ATP synthesis coupled electron transport"/>
    <property type="evidence" value="ECO:0007669"/>
    <property type="project" value="InterPro"/>
</dbReference>
<dbReference type="GO" id="GO:0019684">
    <property type="term" value="P:photosynthesis, light reaction"/>
    <property type="evidence" value="ECO:0007669"/>
    <property type="project" value="UniProtKB-UniRule"/>
</dbReference>
<dbReference type="FunFam" id="1.10.287.3510:FF:000001">
    <property type="entry name" value="NADH-quinone oxidoreductase subunit K"/>
    <property type="match status" value="1"/>
</dbReference>
<dbReference type="Gene3D" id="1.10.287.3510">
    <property type="match status" value="1"/>
</dbReference>
<dbReference type="HAMAP" id="MF_01456">
    <property type="entry name" value="NDH1_NuoK"/>
    <property type="match status" value="1"/>
</dbReference>
<dbReference type="InterPro" id="IPR001133">
    <property type="entry name" value="NADH_UbQ_OxRdtase_chain4L/K"/>
</dbReference>
<dbReference type="InterPro" id="IPR039428">
    <property type="entry name" value="NUOK/Mnh_C1-like"/>
</dbReference>
<dbReference type="NCBIfam" id="NF004320">
    <property type="entry name" value="PRK05715.1-2"/>
    <property type="match status" value="1"/>
</dbReference>
<dbReference type="NCBIfam" id="NF004322">
    <property type="entry name" value="PRK05715.1-4"/>
    <property type="match status" value="1"/>
</dbReference>
<dbReference type="NCBIfam" id="NF004323">
    <property type="entry name" value="PRK05715.1-5"/>
    <property type="match status" value="1"/>
</dbReference>
<dbReference type="PANTHER" id="PTHR11434:SF16">
    <property type="entry name" value="NADH-UBIQUINONE OXIDOREDUCTASE CHAIN 4L"/>
    <property type="match status" value="1"/>
</dbReference>
<dbReference type="PANTHER" id="PTHR11434">
    <property type="entry name" value="NADH-UBIQUINONE OXIDOREDUCTASE SUBUNIT ND4L"/>
    <property type="match status" value="1"/>
</dbReference>
<dbReference type="Pfam" id="PF00420">
    <property type="entry name" value="Oxidored_q2"/>
    <property type="match status" value="1"/>
</dbReference>
<comment type="function">
    <text evidence="1">NDH shuttles electrons from NAD(P)H:plastoquinone, via FMN and iron-sulfur (Fe-S) centers, to quinones in the photosynthetic chain and possibly in a chloroplast respiratory chain. The immediate electron acceptor for the enzyme in this species is believed to be plastoquinone. Couples the redox reaction to proton translocation, and thus conserves the redox energy in a proton gradient.</text>
</comment>
<comment type="catalytic activity">
    <reaction evidence="1">
        <text>a plastoquinone + NADH + (n+1) H(+)(in) = a plastoquinol + NAD(+) + n H(+)(out)</text>
        <dbReference type="Rhea" id="RHEA:42608"/>
        <dbReference type="Rhea" id="RHEA-COMP:9561"/>
        <dbReference type="Rhea" id="RHEA-COMP:9562"/>
        <dbReference type="ChEBI" id="CHEBI:15378"/>
        <dbReference type="ChEBI" id="CHEBI:17757"/>
        <dbReference type="ChEBI" id="CHEBI:57540"/>
        <dbReference type="ChEBI" id="CHEBI:57945"/>
        <dbReference type="ChEBI" id="CHEBI:62192"/>
    </reaction>
</comment>
<comment type="catalytic activity">
    <reaction evidence="1">
        <text>a plastoquinone + NADPH + (n+1) H(+)(in) = a plastoquinol + NADP(+) + n H(+)(out)</text>
        <dbReference type="Rhea" id="RHEA:42612"/>
        <dbReference type="Rhea" id="RHEA-COMP:9561"/>
        <dbReference type="Rhea" id="RHEA-COMP:9562"/>
        <dbReference type="ChEBI" id="CHEBI:15378"/>
        <dbReference type="ChEBI" id="CHEBI:17757"/>
        <dbReference type="ChEBI" id="CHEBI:57783"/>
        <dbReference type="ChEBI" id="CHEBI:58349"/>
        <dbReference type="ChEBI" id="CHEBI:62192"/>
    </reaction>
</comment>
<comment type="subunit">
    <text evidence="1">NDH is composed of at least 16 different subunits, 5 of which are encoded in the nucleus.</text>
</comment>
<comment type="subcellular location">
    <subcellularLocation>
        <location evidence="1">Plastid</location>
        <location evidence="1">Chloroplast thylakoid membrane</location>
        <topology evidence="1">Multi-pass membrane protein</topology>
    </subcellularLocation>
</comment>
<comment type="similarity">
    <text evidence="1">Belongs to the complex I subunit 4L family.</text>
</comment>
<keyword id="KW-0150">Chloroplast</keyword>
<keyword id="KW-0472">Membrane</keyword>
<keyword id="KW-0520">NAD</keyword>
<keyword id="KW-0521">NADP</keyword>
<keyword id="KW-0934">Plastid</keyword>
<keyword id="KW-0618">Plastoquinone</keyword>
<keyword id="KW-0874">Quinone</keyword>
<keyword id="KW-0793">Thylakoid</keyword>
<keyword id="KW-1278">Translocase</keyword>
<keyword id="KW-0812">Transmembrane</keyword>
<keyword id="KW-1133">Transmembrane helix</keyword>
<keyword id="KW-0813">Transport</keyword>
<gene>
    <name evidence="1" type="primary">ndhE</name>
</gene>
<reference key="1">
    <citation type="submission" date="2004-08" db="EMBL/GenBank/DDBJ databases">
        <title>The complete genome sequence of the Lactuca sativa (lettuce) chloroplast.</title>
        <authorList>
            <person name="Kanamoto H."/>
            <person name="Yamashita A."/>
            <person name="Okumura S."/>
            <person name="Hattori M."/>
            <person name="Tomizawa K."/>
        </authorList>
    </citation>
    <scope>NUCLEOTIDE SEQUENCE [LARGE SCALE GENOMIC DNA]</scope>
</reference>
<reference key="2">
    <citation type="submission" date="2006-01" db="EMBL/GenBank/DDBJ databases">
        <title>A comparison of the first two published chloroplast genomes in Asteraceae: Lactuca and Helianthus.</title>
        <authorList>
            <person name="Timme R.E."/>
            <person name="Kuehl J.V."/>
            <person name="Boore J.L."/>
            <person name="Jansen R.K."/>
        </authorList>
    </citation>
    <scope>NUCLEOTIDE SEQUENCE [LARGE SCALE GENOMIC DNA]</scope>
</reference>
<feature type="chain" id="PRO_0000360338" description="NAD(P)H-quinone oxidoreductase subunit 4L, chloroplastic">
    <location>
        <begin position="1"/>
        <end position="101"/>
    </location>
</feature>
<feature type="transmembrane region" description="Helical" evidence="1">
    <location>
        <begin position="2"/>
        <end position="22"/>
    </location>
</feature>
<feature type="transmembrane region" description="Helical" evidence="1">
    <location>
        <begin position="32"/>
        <end position="52"/>
    </location>
</feature>
<feature type="transmembrane region" description="Helical" evidence="1">
    <location>
        <begin position="61"/>
        <end position="81"/>
    </location>
</feature>
<evidence type="ECO:0000255" key="1">
    <source>
        <dbReference type="HAMAP-Rule" id="MF_01456"/>
    </source>
</evidence>
<name>NU4LC_LACSA</name>
<organism>
    <name type="scientific">Lactuca sativa</name>
    <name type="common">Garden lettuce</name>
    <dbReference type="NCBI Taxonomy" id="4236"/>
    <lineage>
        <taxon>Eukaryota</taxon>
        <taxon>Viridiplantae</taxon>
        <taxon>Streptophyta</taxon>
        <taxon>Embryophyta</taxon>
        <taxon>Tracheophyta</taxon>
        <taxon>Spermatophyta</taxon>
        <taxon>Magnoliopsida</taxon>
        <taxon>eudicotyledons</taxon>
        <taxon>Gunneridae</taxon>
        <taxon>Pentapetalae</taxon>
        <taxon>asterids</taxon>
        <taxon>campanulids</taxon>
        <taxon>Asterales</taxon>
        <taxon>Asteraceae</taxon>
        <taxon>Cichorioideae</taxon>
        <taxon>Cichorieae</taxon>
        <taxon>Lactucinae</taxon>
        <taxon>Lactuca</taxon>
    </lineage>
</organism>